<organism>
    <name type="scientific">Rhodospirillum rubrum (strain ATCC 11170 / ATH 1.1.1 / DSM 467 / LMG 4362 / NCIMB 8255 / S1)</name>
    <dbReference type="NCBI Taxonomy" id="269796"/>
    <lineage>
        <taxon>Bacteria</taxon>
        <taxon>Pseudomonadati</taxon>
        <taxon>Pseudomonadota</taxon>
        <taxon>Alphaproteobacteria</taxon>
        <taxon>Rhodospirillales</taxon>
        <taxon>Rhodospirillaceae</taxon>
        <taxon>Rhodospirillum</taxon>
    </lineage>
</organism>
<protein>
    <recommendedName>
        <fullName evidence="1">C4-dicarboxylate transport protein</fullName>
    </recommendedName>
</protein>
<keyword id="KW-0997">Cell inner membrane</keyword>
<keyword id="KW-1003">Cell membrane</keyword>
<keyword id="KW-0472">Membrane</keyword>
<keyword id="KW-1185">Reference proteome</keyword>
<keyword id="KW-0769">Symport</keyword>
<keyword id="KW-0812">Transmembrane</keyword>
<keyword id="KW-1133">Transmembrane helix</keyword>
<keyword id="KW-0813">Transport</keyword>
<comment type="function">
    <text evidence="1">Responsible for the transport of dicarboxylates such as succinate, fumarate, and malate from the periplasm across the membrane.</text>
</comment>
<comment type="subcellular location">
    <subcellularLocation>
        <location evidence="1">Cell inner membrane</location>
        <topology evidence="1">Multi-pass membrane protein</topology>
    </subcellularLocation>
</comment>
<comment type="similarity">
    <text evidence="1">Belongs to the dicarboxylate/amino acid:cation symporter (DAACS) (TC 2.A.23) family.</text>
</comment>
<proteinExistence type="inferred from homology"/>
<feature type="chain" id="PRO_0000322002" description="C4-dicarboxylate transport protein">
    <location>
        <begin position="1"/>
        <end position="447"/>
    </location>
</feature>
<feature type="transmembrane region" description="Helical" evidence="1">
    <location>
        <begin position="19"/>
        <end position="39"/>
    </location>
</feature>
<feature type="transmembrane region" description="Helical" evidence="1">
    <location>
        <begin position="55"/>
        <end position="75"/>
    </location>
</feature>
<feature type="transmembrane region" description="Helical" evidence="1">
    <location>
        <begin position="90"/>
        <end position="110"/>
    </location>
</feature>
<feature type="transmembrane region" description="Helical" evidence="1">
    <location>
        <begin position="155"/>
        <end position="175"/>
    </location>
</feature>
<feature type="transmembrane region" description="Helical" evidence="1">
    <location>
        <begin position="199"/>
        <end position="219"/>
    </location>
</feature>
<feature type="transmembrane region" description="Helical" evidence="1">
    <location>
        <begin position="232"/>
        <end position="252"/>
    </location>
</feature>
<feature type="transmembrane region" description="Helical" evidence="1">
    <location>
        <begin position="343"/>
        <end position="363"/>
    </location>
</feature>
<feature type="transmembrane region" description="Helical" evidence="1">
    <location>
        <begin position="366"/>
        <end position="386"/>
    </location>
</feature>
<gene>
    <name evidence="1" type="primary">dctA</name>
    <name type="ordered locus">Rru_A1437</name>
</gene>
<reference key="1">
    <citation type="journal article" date="2011" name="Stand. Genomic Sci.">
        <title>Complete genome sequence of Rhodospirillum rubrum type strain (S1).</title>
        <authorList>
            <person name="Munk A.C."/>
            <person name="Copeland A."/>
            <person name="Lucas S."/>
            <person name="Lapidus A."/>
            <person name="Del Rio T.G."/>
            <person name="Barry K."/>
            <person name="Detter J.C."/>
            <person name="Hammon N."/>
            <person name="Israni S."/>
            <person name="Pitluck S."/>
            <person name="Brettin T."/>
            <person name="Bruce D."/>
            <person name="Han C."/>
            <person name="Tapia R."/>
            <person name="Gilna P."/>
            <person name="Schmutz J."/>
            <person name="Larimer F."/>
            <person name="Land M."/>
            <person name="Kyrpides N.C."/>
            <person name="Mavromatis K."/>
            <person name="Richardson P."/>
            <person name="Rohde M."/>
            <person name="Goeker M."/>
            <person name="Klenk H.P."/>
            <person name="Zhang Y."/>
            <person name="Roberts G.P."/>
            <person name="Reslewic S."/>
            <person name="Schwartz D.C."/>
        </authorList>
    </citation>
    <scope>NUCLEOTIDE SEQUENCE [LARGE SCALE GENOMIC DNA]</scope>
    <source>
        <strain>ATCC 11170 / ATH 1.1.1 / DSM 467 / LMG 4362 / NCIMB 8255 / S1</strain>
    </source>
</reference>
<evidence type="ECO:0000255" key="1">
    <source>
        <dbReference type="HAMAP-Rule" id="MF_01300"/>
    </source>
</evidence>
<sequence>MAFVVPAAPPRTPHKFYQILYVQVLVAIVAGVLLGHFYPDLGSALKPLGDAFIKLVKMIIAPVIFLTVVTGIAGLTDMQKVGRVAGKAMIYFLSFSTLALIIGMIVANVVHPGSGLNIDPASLDAKAVQTYTSHAHDQSLVGFLMNIIPSTPISAFASGDILQVLFFAVLFGIALATVGERGKPVLDLLNPLLQVVFRLVAIVMKAAPLGAFGAMAFTIGKYGIGSIANLAMLVGTFYLTSGLFVFVVLGLVARYNGFSLLALLRYIKEELLLVLGTSSSEAALPTLMEKLERAGCKKSVVGLVVPTGYSFNLDGTNIYMTLAALFIAQATNIDLSLQDQILLLLVAMLSSKGAAGITGAGFITLAATLSVVPSVPVAGMALILGVDRFMSECRALTNFIGNAVATIVVAKWEGELDRDRLALALKGGGKALLPLEHEAAIHIPSKV</sequence>
<dbReference type="EMBL" id="CP000230">
    <property type="protein sequence ID" value="ABC22238.1"/>
    <property type="molecule type" value="Genomic_DNA"/>
</dbReference>
<dbReference type="RefSeq" id="WP_011389191.1">
    <property type="nucleotide sequence ID" value="NC_007643.1"/>
</dbReference>
<dbReference type="RefSeq" id="YP_426525.1">
    <property type="nucleotide sequence ID" value="NC_007643.1"/>
</dbReference>
<dbReference type="SMR" id="Q2RUF7"/>
<dbReference type="STRING" id="269796.Rru_A1437"/>
<dbReference type="EnsemblBacteria" id="ABC22238">
    <property type="protein sequence ID" value="ABC22238"/>
    <property type="gene ID" value="Rru_A1437"/>
</dbReference>
<dbReference type="KEGG" id="rru:Rru_A1437"/>
<dbReference type="PATRIC" id="fig|269796.9.peg.1506"/>
<dbReference type="eggNOG" id="COG1301">
    <property type="taxonomic scope" value="Bacteria"/>
</dbReference>
<dbReference type="HOGENOM" id="CLU_019375_7_0_5"/>
<dbReference type="PhylomeDB" id="Q2RUF7"/>
<dbReference type="Proteomes" id="UP000001929">
    <property type="component" value="Chromosome"/>
</dbReference>
<dbReference type="GO" id="GO:0005886">
    <property type="term" value="C:plasma membrane"/>
    <property type="evidence" value="ECO:0007669"/>
    <property type="project" value="UniProtKB-SubCell"/>
</dbReference>
<dbReference type="GO" id="GO:0015138">
    <property type="term" value="F:fumarate transmembrane transporter activity"/>
    <property type="evidence" value="ECO:0007669"/>
    <property type="project" value="TreeGrafter"/>
</dbReference>
<dbReference type="GO" id="GO:0015366">
    <property type="term" value="F:malate:proton symporter activity"/>
    <property type="evidence" value="ECO:0007669"/>
    <property type="project" value="TreeGrafter"/>
</dbReference>
<dbReference type="GO" id="GO:0015141">
    <property type="term" value="F:succinate transmembrane transporter activity"/>
    <property type="evidence" value="ECO:0007669"/>
    <property type="project" value="TreeGrafter"/>
</dbReference>
<dbReference type="GO" id="GO:0070778">
    <property type="term" value="P:L-aspartate transmembrane transport"/>
    <property type="evidence" value="ECO:0007669"/>
    <property type="project" value="TreeGrafter"/>
</dbReference>
<dbReference type="FunFam" id="1.10.3860.10:FF:000001">
    <property type="entry name" value="C4-dicarboxylate transport protein"/>
    <property type="match status" value="1"/>
</dbReference>
<dbReference type="Gene3D" id="1.10.3860.10">
    <property type="entry name" value="Sodium:dicarboxylate symporter"/>
    <property type="match status" value="1"/>
</dbReference>
<dbReference type="HAMAP" id="MF_01300">
    <property type="entry name" value="C4_dicarb_transport"/>
    <property type="match status" value="1"/>
</dbReference>
<dbReference type="InterPro" id="IPR023954">
    <property type="entry name" value="C4_dicarb_transport"/>
</dbReference>
<dbReference type="InterPro" id="IPR001991">
    <property type="entry name" value="Na-dicarboxylate_symporter"/>
</dbReference>
<dbReference type="InterPro" id="IPR018107">
    <property type="entry name" value="Na-dicarboxylate_symporter_CS"/>
</dbReference>
<dbReference type="InterPro" id="IPR036458">
    <property type="entry name" value="Na:dicarbo_symporter_sf"/>
</dbReference>
<dbReference type="NCBIfam" id="NF002461">
    <property type="entry name" value="PRK01663.1"/>
    <property type="match status" value="1"/>
</dbReference>
<dbReference type="NCBIfam" id="NF009587">
    <property type="entry name" value="PRK13027.1"/>
    <property type="match status" value="1"/>
</dbReference>
<dbReference type="PANTHER" id="PTHR42865:SF1">
    <property type="entry name" value="AEROBIC C4-DICARBOXYLATE TRANSPORT PROTEIN"/>
    <property type="match status" value="1"/>
</dbReference>
<dbReference type="PANTHER" id="PTHR42865">
    <property type="entry name" value="PROTON/GLUTAMATE-ASPARTATE SYMPORTER"/>
    <property type="match status" value="1"/>
</dbReference>
<dbReference type="Pfam" id="PF00375">
    <property type="entry name" value="SDF"/>
    <property type="match status" value="1"/>
</dbReference>
<dbReference type="PRINTS" id="PR00173">
    <property type="entry name" value="EDTRNSPORT"/>
</dbReference>
<dbReference type="SUPFAM" id="SSF118215">
    <property type="entry name" value="Proton glutamate symport protein"/>
    <property type="match status" value="1"/>
</dbReference>
<dbReference type="PROSITE" id="PS00713">
    <property type="entry name" value="NA_DICARBOXYL_SYMP_1"/>
    <property type="match status" value="1"/>
</dbReference>
<dbReference type="PROSITE" id="PS00714">
    <property type="entry name" value="NA_DICARBOXYL_SYMP_2"/>
    <property type="match status" value="1"/>
</dbReference>
<name>DCTA_RHORT</name>
<accession>Q2RUF7</accession>